<dbReference type="EC" id="2.4.2.10" evidence="1"/>
<dbReference type="EMBL" id="CP000348">
    <property type="protein sequence ID" value="ABJ78491.1"/>
    <property type="molecule type" value="Genomic_DNA"/>
</dbReference>
<dbReference type="RefSeq" id="WP_011669774.1">
    <property type="nucleotide sequence ID" value="NC_008508.1"/>
</dbReference>
<dbReference type="SMR" id="Q053K4"/>
<dbReference type="KEGG" id="lbl:LBL_0950"/>
<dbReference type="HOGENOM" id="CLU_074878_2_1_12"/>
<dbReference type="UniPathway" id="UPA00070">
    <property type="reaction ID" value="UER00119"/>
</dbReference>
<dbReference type="GO" id="GO:0000287">
    <property type="term" value="F:magnesium ion binding"/>
    <property type="evidence" value="ECO:0007669"/>
    <property type="project" value="UniProtKB-UniRule"/>
</dbReference>
<dbReference type="GO" id="GO:0004588">
    <property type="term" value="F:orotate phosphoribosyltransferase activity"/>
    <property type="evidence" value="ECO:0007669"/>
    <property type="project" value="UniProtKB-UniRule"/>
</dbReference>
<dbReference type="GO" id="GO:0044205">
    <property type="term" value="P:'de novo' UMP biosynthetic process"/>
    <property type="evidence" value="ECO:0007669"/>
    <property type="project" value="UniProtKB-UniRule"/>
</dbReference>
<dbReference type="GO" id="GO:0019856">
    <property type="term" value="P:pyrimidine nucleobase biosynthetic process"/>
    <property type="evidence" value="ECO:0007669"/>
    <property type="project" value="TreeGrafter"/>
</dbReference>
<dbReference type="CDD" id="cd06223">
    <property type="entry name" value="PRTases_typeI"/>
    <property type="match status" value="1"/>
</dbReference>
<dbReference type="Gene3D" id="3.40.50.2020">
    <property type="match status" value="1"/>
</dbReference>
<dbReference type="HAMAP" id="MF_01208">
    <property type="entry name" value="PyrE"/>
    <property type="match status" value="1"/>
</dbReference>
<dbReference type="InterPro" id="IPR023031">
    <property type="entry name" value="OPRT"/>
</dbReference>
<dbReference type="InterPro" id="IPR004467">
    <property type="entry name" value="Or_phspho_trans_dom"/>
</dbReference>
<dbReference type="InterPro" id="IPR000836">
    <property type="entry name" value="PRibTrfase_dom"/>
</dbReference>
<dbReference type="InterPro" id="IPR029057">
    <property type="entry name" value="PRTase-like"/>
</dbReference>
<dbReference type="NCBIfam" id="TIGR00336">
    <property type="entry name" value="pyrE"/>
    <property type="match status" value="1"/>
</dbReference>
<dbReference type="PANTHER" id="PTHR19278">
    <property type="entry name" value="OROTATE PHOSPHORIBOSYLTRANSFERASE"/>
    <property type="match status" value="1"/>
</dbReference>
<dbReference type="PANTHER" id="PTHR19278:SF9">
    <property type="entry name" value="URIDINE 5'-MONOPHOSPHATE SYNTHASE"/>
    <property type="match status" value="1"/>
</dbReference>
<dbReference type="Pfam" id="PF00156">
    <property type="entry name" value="Pribosyltran"/>
    <property type="match status" value="1"/>
</dbReference>
<dbReference type="SUPFAM" id="SSF53271">
    <property type="entry name" value="PRTase-like"/>
    <property type="match status" value="1"/>
</dbReference>
<dbReference type="PROSITE" id="PS00103">
    <property type="entry name" value="PUR_PYR_PR_TRANSFER"/>
    <property type="match status" value="1"/>
</dbReference>
<protein>
    <recommendedName>
        <fullName evidence="1">Orotate phosphoribosyltransferase</fullName>
        <shortName evidence="1">OPRT</shortName>
        <shortName evidence="1">OPRTase</shortName>
        <ecNumber evidence="1">2.4.2.10</ecNumber>
    </recommendedName>
</protein>
<accession>Q053K4</accession>
<organism>
    <name type="scientific">Leptospira borgpetersenii serovar Hardjo-bovis (strain L550)</name>
    <dbReference type="NCBI Taxonomy" id="355276"/>
    <lineage>
        <taxon>Bacteria</taxon>
        <taxon>Pseudomonadati</taxon>
        <taxon>Spirochaetota</taxon>
        <taxon>Spirochaetia</taxon>
        <taxon>Leptospirales</taxon>
        <taxon>Leptospiraceae</taxon>
        <taxon>Leptospira</taxon>
    </lineage>
</organism>
<gene>
    <name evidence="1" type="primary">pyrE</name>
    <name type="ordered locus">LBL_0950</name>
</gene>
<feature type="chain" id="PRO_1000138802" description="Orotate phosphoribosyltransferase">
    <location>
        <begin position="1"/>
        <end position="187"/>
    </location>
</feature>
<feature type="binding site" evidence="1">
    <location>
        <position position="99"/>
    </location>
    <ligand>
        <name>5-phospho-alpha-D-ribose 1-diphosphate</name>
        <dbReference type="ChEBI" id="CHEBI:58017"/>
        <note>ligand shared between dimeric partners</note>
    </ligand>
</feature>
<feature type="binding site" description="in other chain" evidence="1">
    <location>
        <position position="100"/>
    </location>
    <ligand>
        <name>5-phospho-alpha-D-ribose 1-diphosphate</name>
        <dbReference type="ChEBI" id="CHEBI:58017"/>
        <note>ligand shared between dimeric partners</note>
    </ligand>
</feature>
<feature type="binding site" evidence="1">
    <location>
        <position position="103"/>
    </location>
    <ligand>
        <name>5-phospho-alpha-D-ribose 1-diphosphate</name>
        <dbReference type="ChEBI" id="CHEBI:58017"/>
        <note>ligand shared between dimeric partners</note>
    </ligand>
</feature>
<feature type="binding site" evidence="1">
    <location>
        <position position="105"/>
    </location>
    <ligand>
        <name>5-phospho-alpha-D-ribose 1-diphosphate</name>
        <dbReference type="ChEBI" id="CHEBI:58017"/>
        <note>ligand shared between dimeric partners</note>
    </ligand>
</feature>
<feature type="binding site" description="in other chain" evidence="1">
    <location>
        <begin position="125"/>
        <end position="133"/>
    </location>
    <ligand>
        <name>5-phospho-alpha-D-ribose 1-diphosphate</name>
        <dbReference type="ChEBI" id="CHEBI:58017"/>
        <note>ligand shared between dimeric partners</note>
    </ligand>
</feature>
<feature type="binding site" evidence="1">
    <location>
        <position position="129"/>
    </location>
    <ligand>
        <name>orotate</name>
        <dbReference type="ChEBI" id="CHEBI:30839"/>
    </ligand>
</feature>
<feature type="binding site" evidence="1">
    <location>
        <position position="157"/>
    </location>
    <ligand>
        <name>orotate</name>
        <dbReference type="ChEBI" id="CHEBI:30839"/>
    </ligand>
</feature>
<reference key="1">
    <citation type="journal article" date="2006" name="Proc. Natl. Acad. Sci. U.S.A.">
        <title>Genome reduction in Leptospira borgpetersenii reflects limited transmission potential.</title>
        <authorList>
            <person name="Bulach D.M."/>
            <person name="Zuerner R.L."/>
            <person name="Wilson P."/>
            <person name="Seemann T."/>
            <person name="McGrath A."/>
            <person name="Cullen P.A."/>
            <person name="Davis J."/>
            <person name="Johnson M."/>
            <person name="Kuczek E."/>
            <person name="Alt D.P."/>
            <person name="Peterson-Burch B."/>
            <person name="Coppel R.L."/>
            <person name="Rood J.I."/>
            <person name="Davies J.K."/>
            <person name="Adler B."/>
        </authorList>
    </citation>
    <scope>NUCLEOTIDE SEQUENCE [LARGE SCALE GENOMIC DNA]</scope>
    <source>
        <strain>L550</strain>
    </source>
</reference>
<sequence length="187" mass="20973">MKQKLLELILTHAYRYSEQPFTLASGKKSRHYFNCKEITLVPDRLELLCKFIVERHLDESGILKPQAFGGLTMGADPICYGISLEFRKQDKNIYPLIVRKFSKDHGTNKLVEGAVHEVKSCVIVDDVITTGGSTIQAIRSMRDSGIVVVQGVCILDRQEGGMDAILAEGVQMFPIFKKSDFGNLEHE</sequence>
<proteinExistence type="inferred from homology"/>
<evidence type="ECO:0000255" key="1">
    <source>
        <dbReference type="HAMAP-Rule" id="MF_01208"/>
    </source>
</evidence>
<name>PYRE_LEPBL</name>
<comment type="function">
    <text evidence="1">Catalyzes the transfer of a ribosyl phosphate group from 5-phosphoribose 1-diphosphate to orotate, leading to the formation of orotidine monophosphate (OMP).</text>
</comment>
<comment type="catalytic activity">
    <reaction evidence="1">
        <text>orotidine 5'-phosphate + diphosphate = orotate + 5-phospho-alpha-D-ribose 1-diphosphate</text>
        <dbReference type="Rhea" id="RHEA:10380"/>
        <dbReference type="ChEBI" id="CHEBI:30839"/>
        <dbReference type="ChEBI" id="CHEBI:33019"/>
        <dbReference type="ChEBI" id="CHEBI:57538"/>
        <dbReference type="ChEBI" id="CHEBI:58017"/>
        <dbReference type="EC" id="2.4.2.10"/>
    </reaction>
</comment>
<comment type="cofactor">
    <cofactor evidence="1">
        <name>Mg(2+)</name>
        <dbReference type="ChEBI" id="CHEBI:18420"/>
    </cofactor>
</comment>
<comment type="pathway">
    <text evidence="1">Pyrimidine metabolism; UMP biosynthesis via de novo pathway; UMP from orotate: step 1/2.</text>
</comment>
<comment type="subunit">
    <text evidence="1">Homodimer.</text>
</comment>
<comment type="similarity">
    <text evidence="1">Belongs to the purine/pyrimidine phosphoribosyltransferase family. PyrE subfamily.</text>
</comment>
<keyword id="KW-0328">Glycosyltransferase</keyword>
<keyword id="KW-0460">Magnesium</keyword>
<keyword id="KW-0665">Pyrimidine biosynthesis</keyword>
<keyword id="KW-0808">Transferase</keyword>